<comment type="function">
    <text evidence="3">Component of the multi-pass translocon (MPT) complex that mediates insertion of multi-pass membrane proteins into the lipid bilayer of membranes. The MPT complex takes over after the SEC61 complex: following membrane insertion of the first few transmembrane segments of proteins by the SEC61 complex, the MPT complex occludes the lateral gate of the SEC61 complex to promote insertion of subsequent transmembrane regions. Also acts as a negative regulator of CHRM3 function, most likely by interfering with its trafficking to the cell membrane. Negatively regulates CHRM3-mediated calcium mobilization and activation of RPS6KA1/p90RSK activity. Regulates LBR localization to the nucleus inner membrane.</text>
</comment>
<comment type="subunit">
    <text evidence="3">Component of the back of Sec61 (BOS) complex, composed of NCLN/Nicalin, NOMO (NOMO1, NOMO2 or NOMO3) and TMEM147. The BOS complex is part of the multi-pass translocon (MPT) complex, composed of three subcomplexes, the GEL complex (composed of RAB5IF/OPTI and TMCO1), the BOS complex (composed of NCLN/Nicalin, NOMO and TMEM147) and the PAT complex (composed of WDR83OS/Asterix and CCDC47). The MPT complex associates with the SEC61 complex. Interacts with CHRM3, CHRM1 and AVPR2. Interacts with LBR; promoting LBR localization to the nucleus inner membrane. Interacts with DHCR7.</text>
</comment>
<comment type="subcellular location">
    <subcellularLocation>
        <location evidence="3">Endoplasmic reticulum membrane</location>
        <topology evidence="4">Multi-pass membrane protein</topology>
    </subcellularLocation>
    <subcellularLocation>
        <location evidence="3">Nucleus membrane</location>
        <topology evidence="4">Multi-pass membrane protein</topology>
    </subcellularLocation>
    <subcellularLocation>
        <location evidence="2">Cell membrane</location>
        <topology evidence="4">Multi-pass membrane protein</topology>
    </subcellularLocation>
</comment>
<comment type="similarity">
    <text evidence="5">Belongs to the TMEM147 family.</text>
</comment>
<accession>Q3SZR6</accession>
<dbReference type="EMBL" id="BC102737">
    <property type="protein sequence ID" value="AAI02738.1"/>
    <property type="molecule type" value="mRNA"/>
</dbReference>
<dbReference type="RefSeq" id="NP_001029796.1">
    <property type="nucleotide sequence ID" value="NM_001034624.1"/>
</dbReference>
<dbReference type="SMR" id="Q3SZR6"/>
<dbReference type="FunCoup" id="Q3SZR6">
    <property type="interactions" value="3257"/>
</dbReference>
<dbReference type="STRING" id="9913.ENSBTAP00000021170"/>
<dbReference type="PaxDb" id="9913-ENSBTAP00000021170"/>
<dbReference type="GeneID" id="535038"/>
<dbReference type="KEGG" id="bta:535038"/>
<dbReference type="CTD" id="10430"/>
<dbReference type="VEuPathDB" id="HostDB:ENSBTAG00000015920"/>
<dbReference type="eggNOG" id="KOG3236">
    <property type="taxonomic scope" value="Eukaryota"/>
</dbReference>
<dbReference type="HOGENOM" id="CLU_086813_0_0_1"/>
<dbReference type="InParanoid" id="Q3SZR6"/>
<dbReference type="OMA" id="SKCVYAG"/>
<dbReference type="TreeFam" id="TF314086"/>
<dbReference type="Proteomes" id="UP000009136">
    <property type="component" value="Chromosome 18"/>
</dbReference>
<dbReference type="Bgee" id="ENSBTAG00000015920">
    <property type="expression patterns" value="Expressed in retina and 108 other cell types or tissues"/>
</dbReference>
<dbReference type="GO" id="GO:0005789">
    <property type="term" value="C:endoplasmic reticulum membrane"/>
    <property type="evidence" value="ECO:0000250"/>
    <property type="project" value="UniProtKB"/>
</dbReference>
<dbReference type="GO" id="GO:0031965">
    <property type="term" value="C:nuclear membrane"/>
    <property type="evidence" value="ECO:0000250"/>
    <property type="project" value="UniProtKB"/>
</dbReference>
<dbReference type="GO" id="GO:0005886">
    <property type="term" value="C:plasma membrane"/>
    <property type="evidence" value="ECO:0000250"/>
    <property type="project" value="UniProtKB"/>
</dbReference>
<dbReference type="GO" id="GO:0043022">
    <property type="term" value="F:ribosome binding"/>
    <property type="evidence" value="ECO:0000250"/>
    <property type="project" value="UniProtKB"/>
</dbReference>
<dbReference type="GO" id="GO:0160063">
    <property type="term" value="P:multi-pass transmembrane protein insertion into ER membrane"/>
    <property type="evidence" value="ECO:0000250"/>
    <property type="project" value="UniProtKB"/>
</dbReference>
<dbReference type="GO" id="GO:0036228">
    <property type="term" value="P:protein localization to nuclear inner membrane"/>
    <property type="evidence" value="ECO:0000250"/>
    <property type="project" value="UniProtKB"/>
</dbReference>
<dbReference type="InterPro" id="IPR019164">
    <property type="entry name" value="TMEM147"/>
</dbReference>
<dbReference type="PANTHER" id="PTHR12869:SF0">
    <property type="entry name" value="BOS COMPLEX SUBUNIT TMEM147"/>
    <property type="match status" value="1"/>
</dbReference>
<dbReference type="PANTHER" id="PTHR12869">
    <property type="entry name" value="SMALL SEVEN TRANSMEMBRANE DOMAIN-CONTAINING PROTEIN"/>
    <property type="match status" value="1"/>
</dbReference>
<dbReference type="Pfam" id="PF09767">
    <property type="entry name" value="DUF2053"/>
    <property type="match status" value="1"/>
</dbReference>
<name>TM147_BOVIN</name>
<evidence type="ECO:0000250" key="1">
    <source>
        <dbReference type="UniProtKB" id="A0A8I3MKU8"/>
    </source>
</evidence>
<evidence type="ECO:0000250" key="2">
    <source>
        <dbReference type="UniProtKB" id="I6VSD2"/>
    </source>
</evidence>
<evidence type="ECO:0000250" key="3">
    <source>
        <dbReference type="UniProtKB" id="Q9BVK8"/>
    </source>
</evidence>
<evidence type="ECO:0000255" key="4"/>
<evidence type="ECO:0000305" key="5"/>
<gene>
    <name type="primary">TMEM147</name>
</gene>
<feature type="chain" id="PRO_0000271700" description="BOS complex subunit TMEM147">
    <location>
        <begin position="1"/>
        <end position="224"/>
    </location>
</feature>
<feature type="transmembrane region" description="Helical" evidence="1">
    <location>
        <begin position="1"/>
        <end position="21"/>
    </location>
</feature>
<feature type="topological domain" description="Cytoplasmic" evidence="1">
    <location>
        <begin position="22"/>
        <end position="34"/>
    </location>
</feature>
<feature type="transmembrane region" description="Helical" evidence="1">
    <location>
        <begin position="35"/>
        <end position="58"/>
    </location>
</feature>
<feature type="topological domain" description="Lumenal" evidence="1">
    <location>
        <begin position="59"/>
        <end position="66"/>
    </location>
</feature>
<feature type="transmembrane region" description="Helical" evidence="1">
    <location>
        <begin position="67"/>
        <end position="88"/>
    </location>
</feature>
<feature type="topological domain" description="Cytoplasmic" evidence="1">
    <location>
        <begin position="89"/>
        <end position="98"/>
    </location>
</feature>
<feature type="transmembrane region" description="Helical" evidence="1">
    <location>
        <begin position="99"/>
        <end position="124"/>
    </location>
</feature>
<feature type="topological domain" description="Lumenal" evidence="1">
    <location>
        <begin position="125"/>
        <end position="129"/>
    </location>
</feature>
<feature type="transmembrane region" description="Helical" evidence="1">
    <location>
        <begin position="130"/>
        <end position="155"/>
    </location>
</feature>
<feature type="topological domain" description="Cytoplasmic" evidence="1">
    <location>
        <begin position="156"/>
        <end position="164"/>
    </location>
</feature>
<feature type="transmembrane region" description="Helical" evidence="1">
    <location>
        <begin position="165"/>
        <end position="187"/>
    </location>
</feature>
<feature type="topological domain" description="Lumenal" evidence="1">
    <location>
        <begin position="188"/>
        <end position="194"/>
    </location>
</feature>
<feature type="transmembrane region" description="Helical" evidence="1">
    <location>
        <begin position="195"/>
        <end position="216"/>
    </location>
</feature>
<feature type="topological domain" description="Cytoplasmic" evidence="1">
    <location>
        <begin position="217"/>
        <end position="224"/>
    </location>
</feature>
<keyword id="KW-1003">Cell membrane</keyword>
<keyword id="KW-0256">Endoplasmic reticulum</keyword>
<keyword id="KW-0472">Membrane</keyword>
<keyword id="KW-0539">Nucleus</keyword>
<keyword id="KW-1185">Reference proteome</keyword>
<keyword id="KW-0812">Transmembrane</keyword>
<keyword id="KW-1133">Transmembrane helix</keyword>
<protein>
    <recommendedName>
        <fullName evidence="5">BOS complex subunit TMEM147</fullName>
    </recommendedName>
    <alternativeName>
        <fullName evidence="5">Transmembrane protein 147</fullName>
    </alternativeName>
</protein>
<sequence length="224" mass="25321">MTLFHFGNCFALAYFPYFITYKCSGLSEYNAFWKCVQAGVTYLFVQLCKMLFLATFFPTWEGGIYDFIGEFMKASVDVADLIGLNLVMSRNAGKGEYKIMVAALGWATAELIMSRCIPLWVGARGIEFDWKYIQMSIDSNISLVHYIVASAQVWMITRYDLYHTYRPAVLLLMFLSVYKAFVMETFVHLCSLGSWTALLARALVTGLLALSTLALYVAVVNVHS</sequence>
<organism>
    <name type="scientific">Bos taurus</name>
    <name type="common">Bovine</name>
    <dbReference type="NCBI Taxonomy" id="9913"/>
    <lineage>
        <taxon>Eukaryota</taxon>
        <taxon>Metazoa</taxon>
        <taxon>Chordata</taxon>
        <taxon>Craniata</taxon>
        <taxon>Vertebrata</taxon>
        <taxon>Euteleostomi</taxon>
        <taxon>Mammalia</taxon>
        <taxon>Eutheria</taxon>
        <taxon>Laurasiatheria</taxon>
        <taxon>Artiodactyla</taxon>
        <taxon>Ruminantia</taxon>
        <taxon>Pecora</taxon>
        <taxon>Bovidae</taxon>
        <taxon>Bovinae</taxon>
        <taxon>Bos</taxon>
    </lineage>
</organism>
<reference key="1">
    <citation type="submission" date="2005-08" db="EMBL/GenBank/DDBJ databases">
        <authorList>
            <consortium name="NIH - Mammalian Gene Collection (MGC) project"/>
        </authorList>
    </citation>
    <scope>NUCLEOTIDE SEQUENCE [LARGE SCALE MRNA]</scope>
    <source>
        <strain>Hereford</strain>
        <tissue>Testis</tissue>
    </source>
</reference>
<proteinExistence type="evidence at transcript level"/>